<dbReference type="EMBL" id="AB030858">
    <property type="protein sequence ID" value="BAB08128.1"/>
    <property type="molecule type" value="mRNA"/>
</dbReference>
<dbReference type="GO" id="GO:0009507">
    <property type="term" value="C:chloroplast"/>
    <property type="evidence" value="ECO:0007669"/>
    <property type="project" value="UniProtKB-SubCell"/>
</dbReference>
<dbReference type="GO" id="GO:0003723">
    <property type="term" value="F:RNA binding"/>
    <property type="evidence" value="ECO:0007669"/>
    <property type="project" value="UniProtKB-KW"/>
</dbReference>
<dbReference type="GO" id="GO:0006397">
    <property type="term" value="P:mRNA processing"/>
    <property type="evidence" value="ECO:0007669"/>
    <property type="project" value="UniProtKB-KW"/>
</dbReference>
<dbReference type="GO" id="GO:0008380">
    <property type="term" value="P:RNA splicing"/>
    <property type="evidence" value="ECO:0007669"/>
    <property type="project" value="UniProtKB-UniRule"/>
</dbReference>
<dbReference type="GO" id="GO:0008033">
    <property type="term" value="P:tRNA processing"/>
    <property type="evidence" value="ECO:0007669"/>
    <property type="project" value="UniProtKB-KW"/>
</dbReference>
<dbReference type="HAMAP" id="MF_01390">
    <property type="entry name" value="MatK"/>
    <property type="match status" value="1"/>
</dbReference>
<dbReference type="InterPro" id="IPR024937">
    <property type="entry name" value="Domain_X"/>
</dbReference>
<dbReference type="InterPro" id="IPR002866">
    <property type="entry name" value="Maturase_MatK"/>
</dbReference>
<dbReference type="InterPro" id="IPR024942">
    <property type="entry name" value="Maturase_MatK_N"/>
</dbReference>
<dbReference type="PANTHER" id="PTHR34811">
    <property type="entry name" value="MATURASE K"/>
    <property type="match status" value="1"/>
</dbReference>
<dbReference type="PANTHER" id="PTHR34811:SF1">
    <property type="entry name" value="MATURASE K"/>
    <property type="match status" value="1"/>
</dbReference>
<dbReference type="Pfam" id="PF01348">
    <property type="entry name" value="Intron_maturas2"/>
    <property type="match status" value="1"/>
</dbReference>
<dbReference type="Pfam" id="PF01824">
    <property type="entry name" value="MatK_N"/>
    <property type="match status" value="1"/>
</dbReference>
<geneLocation type="chloroplast"/>
<protein>
    <recommendedName>
        <fullName evidence="1">Maturase K</fullName>
    </recommendedName>
    <alternativeName>
        <fullName evidence="1">Intron maturase</fullName>
    </alternativeName>
</protein>
<name>MATK_LILHE</name>
<evidence type="ECO:0000255" key="1">
    <source>
        <dbReference type="HAMAP-Rule" id="MF_01390"/>
    </source>
</evidence>
<comment type="function">
    <text evidence="1">Usually encoded in the trnK tRNA gene intron. Probably assists in splicing its own and other chloroplast group II introns.</text>
</comment>
<comment type="subcellular location">
    <subcellularLocation>
        <location>Plastid</location>
        <location>Chloroplast</location>
    </subcellularLocation>
</comment>
<comment type="similarity">
    <text evidence="1">Belongs to the intron maturase 2 family. MatK subfamily.</text>
</comment>
<proteinExistence type="evidence at transcript level"/>
<reference key="1">
    <citation type="journal article" date="2000" name="Plant Species Biol.">
        <title>Molecular systematics of Lilium and allied genera (Liliaceae): phylogenetic relationships among Lilium and related genera based on the rbcL and matK gene sequence data.</title>
        <authorList>
            <person name="Hayashi K."/>
            <person name="Kawano S."/>
        </authorList>
        <dbReference type="AGRICOLA" id="IND23250741"/>
    </citation>
    <scope>NUCLEOTIDE SEQUENCE [MRNA]</scope>
</reference>
<keyword id="KW-0150">Chloroplast</keyword>
<keyword id="KW-0507">mRNA processing</keyword>
<keyword id="KW-0934">Plastid</keyword>
<keyword id="KW-0694">RNA-binding</keyword>
<keyword id="KW-0819">tRNA processing</keyword>
<sequence>MEELQEYFKKDRSPQQHFLYPLLLQEYIYTLAHDDSLNGSIFYEPIEFIGYDNKFSLVLVKRLIIRMYQQNFLIYLVNDSNQNRFGGHSNYFYSHFFYSQMVSKGFSVIVEIPFSLRLVSSSEEKEIPKSQNLGSIHSIFPFLEDKLSHLNNVSDILIPHPIHFEILVQILQCWIQDVPSLHLLRFFLHKYQNLNKTIQSNKTIYVFSKENKRLFWFLHNSYVSECEFLLVFFHKQSCYLRSTSSGAFLERSHFYGKMEHIIIVCCNNFQKTLWPVKDPLIHYVRYQGKAILASRGTHLLMKKWRYYFVNFWQYYFHFWSQPYRMHINSLLNYSFYFMGYLLGVLINPYAVKNQMLENSFLIDTVINKFDTIIPIIPLIGSLSKAKFCTFSGHPISKPIWADLLDFDIIDRFGRICRNLSHYHSGSSKKQSLYRIKYILRLSCARTLARKHKSTVRALLQRLGSGLLEEFFTEEEQVLSFFFPKTTLFTLHGSHRERIWSLDIIRINDLVNN</sequence>
<accession>Q9GIH9</accession>
<feature type="chain" id="PRO_0000143475" description="Maturase K">
    <location>
        <begin position="1"/>
        <end position="512"/>
    </location>
</feature>
<gene>
    <name evidence="1" type="primary">matK</name>
</gene>
<organism>
    <name type="scientific">Lilium henryi</name>
    <name type="common">Henry's lily</name>
    <dbReference type="NCBI Taxonomy" id="4689"/>
    <lineage>
        <taxon>Eukaryota</taxon>
        <taxon>Viridiplantae</taxon>
        <taxon>Streptophyta</taxon>
        <taxon>Embryophyta</taxon>
        <taxon>Tracheophyta</taxon>
        <taxon>Spermatophyta</taxon>
        <taxon>Magnoliopsida</taxon>
        <taxon>Liliopsida</taxon>
        <taxon>Liliales</taxon>
        <taxon>Liliaceae</taxon>
        <taxon>Lilium</taxon>
    </lineage>
</organism>